<keyword id="KW-1015">Disulfide bond</keyword>
<keyword id="KW-0325">Glycoprotein</keyword>
<keyword id="KW-0378">Hydrolase</keyword>
<keyword id="KW-0645">Protease</keyword>
<keyword id="KW-1185">Reference proteome</keyword>
<keyword id="KW-0732">Signal</keyword>
<keyword id="KW-0788">Thiol protease</keyword>
<keyword id="KW-0926">Vacuole</keyword>
<keyword id="KW-0865">Zymogen</keyword>
<organism>
    <name type="scientific">Zea mays</name>
    <name type="common">Maize</name>
    <dbReference type="NCBI Taxonomy" id="4577"/>
    <lineage>
        <taxon>Eukaryota</taxon>
        <taxon>Viridiplantae</taxon>
        <taxon>Streptophyta</taxon>
        <taxon>Embryophyta</taxon>
        <taxon>Tracheophyta</taxon>
        <taxon>Spermatophyta</taxon>
        <taxon>Magnoliopsida</taxon>
        <taxon>Liliopsida</taxon>
        <taxon>Poales</taxon>
        <taxon>Poaceae</taxon>
        <taxon>PACMAD clade</taxon>
        <taxon>Panicoideae</taxon>
        <taxon>Andropogonodae</taxon>
        <taxon>Andropogoneae</taxon>
        <taxon>Tripsacinae</taxon>
        <taxon>Zea</taxon>
    </lineage>
</organism>
<evidence type="ECO:0000250" key="1">
    <source>
        <dbReference type="UniProtKB" id="P00785"/>
    </source>
</evidence>
<evidence type="ECO:0000250" key="2">
    <source>
        <dbReference type="UniProtKB" id="P07858"/>
    </source>
</evidence>
<evidence type="ECO:0000250" key="3">
    <source>
        <dbReference type="UniProtKB" id="P25250"/>
    </source>
</evidence>
<evidence type="ECO:0000250" key="4">
    <source>
        <dbReference type="UniProtKB" id="P80884"/>
    </source>
</evidence>
<evidence type="ECO:0000255" key="5"/>
<evidence type="ECO:0000255" key="6">
    <source>
        <dbReference type="PROSITE-ProRule" id="PRU00498"/>
    </source>
</evidence>
<evidence type="ECO:0000255" key="7">
    <source>
        <dbReference type="PROSITE-ProRule" id="PRU10088"/>
    </source>
</evidence>
<evidence type="ECO:0000255" key="8">
    <source>
        <dbReference type="PROSITE-ProRule" id="PRU10089"/>
    </source>
</evidence>
<evidence type="ECO:0000255" key="9">
    <source>
        <dbReference type="PROSITE-ProRule" id="PRU10090"/>
    </source>
</evidence>
<evidence type="ECO:0000305" key="10"/>
<name>CYSP2_MAIZE</name>
<sequence length="360" mass="39199">MVPRRLFVLAVVVLADTAAVVNSGFADSNPIRPVTDRAASALESTVFAALGRTRDALRFARFAVRYGKSYESAAEVHKRFRIFSESLQLVRSTNRKGLSYRLGINRFADMSWEEFRATRLGAAQNCSATLTGNHRMRAAAVALPETKDWREDGIVSPVKNQGHCGSCWTFSTTGALEAAYTQATGKPISLSEQQLVDCGFAFNNFGCNGGLPSQAFEYIKYNGGLDTEESYPYQGVNGICKFKNENVGVKVLDSVNITLGAEDELKDAVGLVRPVSVAFEVITGFRLYKSGVYTSDHCGTTPMDVNHAVLAVGYGVEDGVPYWLIKNSWGADWGDEGYFKMEMGKNMCGVATCASYPIVA</sequence>
<proteinExistence type="evidence at transcript level"/>
<reference key="1">
    <citation type="journal article" date="1995" name="Biochim. Biophys. Acta">
        <title>Isolation and characterization of two distinct cDNA clones encoding corn seed cysteine proteinases.</title>
        <authorList>
            <person name="Domoto C."/>
            <person name="Watanabe H."/>
            <person name="Abe M."/>
            <person name="Abe K."/>
            <person name="Arai S."/>
        </authorList>
    </citation>
    <scope>NUCLEOTIDE SEQUENCE [MRNA]</scope>
    <source>
        <tissue>Seed</tissue>
    </source>
</reference>
<accession>Q10717</accession>
<protein>
    <recommendedName>
        <fullName>Cysteine proteinase 2</fullName>
        <ecNumber evidence="4">3.4.22.-</ecNumber>
    </recommendedName>
</protein>
<dbReference type="EC" id="3.4.22.-" evidence="4"/>
<dbReference type="EMBL" id="D45403">
    <property type="protein sequence ID" value="BAA08245.1"/>
    <property type="molecule type" value="mRNA"/>
</dbReference>
<dbReference type="PIR" id="S59598">
    <property type="entry name" value="S59598"/>
</dbReference>
<dbReference type="SMR" id="Q10717"/>
<dbReference type="FunCoup" id="Q10717">
    <property type="interactions" value="534"/>
</dbReference>
<dbReference type="STRING" id="4577.Q10717"/>
<dbReference type="MEROPS" id="C01.041"/>
<dbReference type="MEROPS" id="I29.003"/>
<dbReference type="GlyCosmos" id="Q10717">
    <property type="glycosylation" value="2 sites, No reported glycans"/>
</dbReference>
<dbReference type="PaxDb" id="4577-GRMZM2G038636_P01"/>
<dbReference type="MaizeGDB" id="25431"/>
<dbReference type="eggNOG" id="KOG1543">
    <property type="taxonomic scope" value="Eukaryota"/>
</dbReference>
<dbReference type="InParanoid" id="Q10717"/>
<dbReference type="Proteomes" id="UP000007305">
    <property type="component" value="Unplaced"/>
</dbReference>
<dbReference type="ExpressionAtlas" id="Q10717">
    <property type="expression patterns" value="baseline and differential"/>
</dbReference>
<dbReference type="GO" id="GO:0005615">
    <property type="term" value="C:extracellular space"/>
    <property type="evidence" value="ECO:0000318"/>
    <property type="project" value="GO_Central"/>
</dbReference>
<dbReference type="GO" id="GO:0005764">
    <property type="term" value="C:lysosome"/>
    <property type="evidence" value="ECO:0000318"/>
    <property type="project" value="GO_Central"/>
</dbReference>
<dbReference type="GO" id="GO:0004197">
    <property type="term" value="F:cysteine-type endopeptidase activity"/>
    <property type="evidence" value="ECO:0000318"/>
    <property type="project" value="GO_Central"/>
</dbReference>
<dbReference type="GO" id="GO:0006955">
    <property type="term" value="P:immune response"/>
    <property type="evidence" value="ECO:0000318"/>
    <property type="project" value="GO_Central"/>
</dbReference>
<dbReference type="GO" id="GO:2001235">
    <property type="term" value="P:positive regulation of apoptotic signaling pathway"/>
    <property type="evidence" value="ECO:0000318"/>
    <property type="project" value="GO_Central"/>
</dbReference>
<dbReference type="GO" id="GO:0051603">
    <property type="term" value="P:proteolysis involved in protein catabolic process"/>
    <property type="evidence" value="ECO:0000318"/>
    <property type="project" value="GO_Central"/>
</dbReference>
<dbReference type="CDD" id="cd02248">
    <property type="entry name" value="Peptidase_C1A"/>
    <property type="match status" value="1"/>
</dbReference>
<dbReference type="FunFam" id="3.90.70.10:FF:000039">
    <property type="entry name" value="Cysteine proteinase 2, putative"/>
    <property type="match status" value="1"/>
</dbReference>
<dbReference type="Gene3D" id="3.90.70.10">
    <property type="entry name" value="Cysteine proteinases"/>
    <property type="match status" value="1"/>
</dbReference>
<dbReference type="InterPro" id="IPR038765">
    <property type="entry name" value="Papain-like_cys_pep_sf"/>
</dbReference>
<dbReference type="InterPro" id="IPR025661">
    <property type="entry name" value="Pept_asp_AS"/>
</dbReference>
<dbReference type="InterPro" id="IPR000169">
    <property type="entry name" value="Pept_cys_AS"/>
</dbReference>
<dbReference type="InterPro" id="IPR025660">
    <property type="entry name" value="Pept_his_AS"/>
</dbReference>
<dbReference type="InterPro" id="IPR013128">
    <property type="entry name" value="Peptidase_C1A"/>
</dbReference>
<dbReference type="InterPro" id="IPR000668">
    <property type="entry name" value="Peptidase_C1A_C"/>
</dbReference>
<dbReference type="InterPro" id="IPR039417">
    <property type="entry name" value="Peptidase_C1A_papain-like"/>
</dbReference>
<dbReference type="InterPro" id="IPR013201">
    <property type="entry name" value="Prot_inhib_I29"/>
</dbReference>
<dbReference type="PANTHER" id="PTHR12411">
    <property type="entry name" value="CYSTEINE PROTEASE FAMILY C1-RELATED"/>
    <property type="match status" value="1"/>
</dbReference>
<dbReference type="Pfam" id="PF08246">
    <property type="entry name" value="Inhibitor_I29"/>
    <property type="match status" value="1"/>
</dbReference>
<dbReference type="Pfam" id="PF00112">
    <property type="entry name" value="Peptidase_C1"/>
    <property type="match status" value="1"/>
</dbReference>
<dbReference type="PRINTS" id="PR00705">
    <property type="entry name" value="PAPAIN"/>
</dbReference>
<dbReference type="SMART" id="SM00848">
    <property type="entry name" value="Inhibitor_I29"/>
    <property type="match status" value="1"/>
</dbReference>
<dbReference type="SMART" id="SM00645">
    <property type="entry name" value="Pept_C1"/>
    <property type="match status" value="1"/>
</dbReference>
<dbReference type="SUPFAM" id="SSF54001">
    <property type="entry name" value="Cysteine proteinases"/>
    <property type="match status" value="1"/>
</dbReference>
<dbReference type="PROSITE" id="PS00640">
    <property type="entry name" value="THIOL_PROTEASE_ASN"/>
    <property type="match status" value="1"/>
</dbReference>
<dbReference type="PROSITE" id="PS00139">
    <property type="entry name" value="THIOL_PROTEASE_CYS"/>
    <property type="match status" value="1"/>
</dbReference>
<dbReference type="PROSITE" id="PS00639">
    <property type="entry name" value="THIOL_PROTEASE_HIS"/>
    <property type="match status" value="1"/>
</dbReference>
<feature type="signal peptide" evidence="5">
    <location>
        <begin position="1"/>
        <end position="19"/>
    </location>
</feature>
<feature type="propeptide" id="PRO_0000026430" description="Activation peptide" evidence="1">
    <location>
        <begin position="20"/>
        <end position="142"/>
    </location>
</feature>
<feature type="chain" id="PRO_0000026431" description="Cysteine proteinase 2">
    <location>
        <begin position="143"/>
        <end position="360"/>
    </location>
</feature>
<feature type="active site" evidence="7">
    <location>
        <position position="167"/>
    </location>
</feature>
<feature type="active site" evidence="8">
    <location>
        <position position="307"/>
    </location>
</feature>
<feature type="active site" evidence="9">
    <location>
        <position position="327"/>
    </location>
</feature>
<feature type="glycosylation site" description="N-linked (GlcNAc...) asparagine" evidence="6">
    <location>
        <position position="125"/>
    </location>
</feature>
<feature type="glycosylation site" description="N-linked (GlcNAc...) asparagine" evidence="6">
    <location>
        <position position="256"/>
    </location>
</feature>
<feature type="disulfide bond" evidence="2">
    <location>
        <begin position="164"/>
        <end position="207"/>
    </location>
</feature>
<feature type="disulfide bond" evidence="3">
    <location>
        <begin position="198"/>
        <end position="240"/>
    </location>
</feature>
<feature type="disulfide bond" evidence="3">
    <location>
        <begin position="298"/>
        <end position="348"/>
    </location>
</feature>
<comment type="function">
    <text>Involved in the degradation of the storage protein zein. May play a role in proteolysis during emergencies.</text>
</comment>
<comment type="subcellular location">
    <subcellularLocation>
        <location evidence="10">Vacuole</location>
    </subcellularLocation>
</comment>
<comment type="tissue specificity">
    <text>Expressed at the onset of germination.</text>
</comment>
<comment type="similarity">
    <text evidence="7 8 9">Belongs to the peptidase C1 family.</text>
</comment>
<gene>
    <name type="primary">CCP2</name>
</gene>